<feature type="chain" id="PRO_0000103632" description="Phosphoenolpyruvate carboxykinase [GTP]">
    <location>
        <begin position="1"/>
        <end position="643"/>
    </location>
</feature>
<feature type="active site" evidence="2">
    <location>
        <position position="306"/>
    </location>
</feature>
<feature type="binding site" evidence="2">
    <location>
        <position position="102"/>
    </location>
    <ligand>
        <name>substrate</name>
    </ligand>
</feature>
<feature type="binding site" evidence="2">
    <location>
        <begin position="253"/>
        <end position="255"/>
    </location>
    <ligand>
        <name>substrate</name>
    </ligand>
</feature>
<feature type="binding site" evidence="2">
    <location>
        <position position="262"/>
    </location>
    <ligand>
        <name>Mn(2+)</name>
        <dbReference type="ChEBI" id="CHEBI:29035"/>
    </ligand>
</feature>
<feature type="binding site" evidence="2">
    <location>
        <position position="282"/>
    </location>
    <ligand>
        <name>Mn(2+)</name>
        <dbReference type="ChEBI" id="CHEBI:29035"/>
    </ligand>
</feature>
<feature type="binding site" evidence="2">
    <location>
        <position position="304"/>
    </location>
    <ligand>
        <name>substrate</name>
    </ligand>
</feature>
<feature type="binding site" evidence="2">
    <location>
        <begin position="305"/>
        <end position="310"/>
    </location>
    <ligand>
        <name>GTP</name>
        <dbReference type="ChEBI" id="CHEBI:37565"/>
    </ligand>
</feature>
<feature type="binding site" evidence="2">
    <location>
        <position position="329"/>
    </location>
    <ligand>
        <name>Mn(2+)</name>
        <dbReference type="ChEBI" id="CHEBI:29035"/>
    </ligand>
</feature>
<feature type="binding site" evidence="2">
    <location>
        <begin position="422"/>
        <end position="424"/>
    </location>
    <ligand>
        <name>substrate</name>
    </ligand>
</feature>
<feature type="binding site" evidence="2">
    <location>
        <position position="424"/>
    </location>
    <ligand>
        <name>GTP</name>
        <dbReference type="ChEBI" id="CHEBI:37565"/>
    </ligand>
</feature>
<feature type="binding site" evidence="2">
    <location>
        <position position="455"/>
    </location>
    <ligand>
        <name>GTP</name>
        <dbReference type="ChEBI" id="CHEBI:37565"/>
    </ligand>
</feature>
<feature type="binding site" evidence="2">
    <location>
        <begin position="548"/>
        <end position="551"/>
    </location>
    <ligand>
        <name>GTP</name>
        <dbReference type="ChEBI" id="CHEBI:37565"/>
    </ligand>
</feature>
<name>PCKG_ASCSU</name>
<reference key="1">
    <citation type="journal article" date="1993" name="Exp. Parasitol.">
        <title>Ascaris suum: cloning of a cDNA encoding phosphoenolpyruvate carboxykinase.</title>
        <authorList>
            <person name="Geary T.G."/>
            <person name="Winterrowd C.A."/>
            <person name="Alexander-Bowman S.J."/>
            <person name="Favreau M.A."/>
            <person name="Nulf S.C."/>
            <person name="Klein R.D."/>
        </authorList>
    </citation>
    <scope>NUCLEOTIDE SEQUENCE [MRNA]</scope>
    <source>
        <tissue>Nerve cord</tissue>
        <tissue>Pharynx</tissue>
    </source>
</reference>
<accession>Q05893</accession>
<keyword id="KW-0210">Decarboxylase</keyword>
<keyword id="KW-0342">GTP-binding</keyword>
<keyword id="KW-0456">Lyase</keyword>
<keyword id="KW-0464">Manganese</keyword>
<keyword id="KW-0479">Metal-binding</keyword>
<keyword id="KW-0547">Nucleotide-binding</keyword>
<sequence length="643" mass="72230">MRCRSLSHFKDDDFAVVSEVVTHKQNHIPVIKGDFVSLPKHVQRFVAEKAELMKPSAIFICDGSQNEADELIARCVERGVLVPLKAYKNNYLCRTDPRDVARVESKTWMITPEKYDSVCHTPEGVKPMMGQWMSPDEFGKELDDRFPGCMAGRTMYVIPYSMGPVGGPLSKIGIELTDSDYVVLCMRIMTRMGEPVLKALAKNNGEFVRCVHSVGQPKPVATKVINHWPCNPEKTIIAHRPAEREIWSFGSGYGGNSLLGKKCFALRIAMNIGYDEGWMAEHMLIMGVTSPKGEERFVAAAFPSACGKTNLAMLEPTIPGWKVRVIGDDIAWMKFGADGRLYAINPEYGFFGVAPGTSHKTNPMAMASFQENTIFTNVAETADGEYFWEGLEHEVKNPKVDMINWLGEPWHIGDESKAAHPNSRFTAPAGQCPIIHPDWEKPEGVPIDAIIFGGRRPEGVPLVFESRSWVHGIFVGACVKSEATAAAEHTGKQVMHDPMAMRPFMGYNFGRYMRHWMKLGQPPHKVPKIFHVNWFRQSADHKFLWPGYGDNIRVIDWILRRCSGDATIAEETPIGFIPKKGTINLEGLPNVNWDELMSIPKSYWLEDMVETKTFFENQVGSDLPPEIAKELEAQTERIKALKE</sequence>
<comment type="function">
    <text>In parasitic nematodes PEPCK carboxylates phosphoenolpyruvate to oxaloacetate thus introducing the products of glycolysis to mitochondrial metabolism.</text>
</comment>
<comment type="function">
    <text evidence="1">Catalyzes the conversion of oxaloacetate (OAA) to phosphoenolpyruvate (PEP), the rate-limiting step in the metabolic pathway that produces glucose from lactate and other precursors derived from the citric acid cycle.</text>
</comment>
<comment type="catalytic activity">
    <reaction>
        <text>oxaloacetate + GTP = phosphoenolpyruvate + GDP + CO2</text>
        <dbReference type="Rhea" id="RHEA:10388"/>
        <dbReference type="ChEBI" id="CHEBI:16452"/>
        <dbReference type="ChEBI" id="CHEBI:16526"/>
        <dbReference type="ChEBI" id="CHEBI:37565"/>
        <dbReference type="ChEBI" id="CHEBI:58189"/>
        <dbReference type="ChEBI" id="CHEBI:58702"/>
        <dbReference type="EC" id="4.1.1.32"/>
    </reaction>
</comment>
<comment type="cofactor">
    <cofactor evidence="1">
        <name>Mn(2+)</name>
        <dbReference type="ChEBI" id="CHEBI:29035"/>
    </cofactor>
    <text evidence="1">Binds 1 Mn(2+) ion per subunit.</text>
</comment>
<comment type="subunit">
    <text>Monomer.</text>
</comment>
<comment type="similarity">
    <text evidence="3">Belongs to the phosphoenolpyruvate carboxykinase [GTP] family.</text>
</comment>
<proteinExistence type="evidence at transcript level"/>
<organism>
    <name type="scientific">Ascaris suum</name>
    <name type="common">Pig roundworm</name>
    <name type="synonym">Ascaris lumbricoides</name>
    <dbReference type="NCBI Taxonomy" id="6253"/>
    <lineage>
        <taxon>Eukaryota</taxon>
        <taxon>Metazoa</taxon>
        <taxon>Ecdysozoa</taxon>
        <taxon>Nematoda</taxon>
        <taxon>Chromadorea</taxon>
        <taxon>Rhabditida</taxon>
        <taxon>Spirurina</taxon>
        <taxon>Ascaridomorpha</taxon>
        <taxon>Ascaridoidea</taxon>
        <taxon>Ascarididae</taxon>
        <taxon>Ascaris</taxon>
    </lineage>
</organism>
<evidence type="ECO:0000250" key="1"/>
<evidence type="ECO:0000250" key="2">
    <source>
        <dbReference type="UniProtKB" id="P07379"/>
    </source>
</evidence>
<evidence type="ECO:0000305" key="3"/>
<gene>
    <name type="primary">PEPCK</name>
</gene>
<dbReference type="EC" id="4.1.1.32"/>
<dbReference type="EMBL" id="L01787">
    <property type="protein sequence ID" value="AAA29378.1"/>
    <property type="molecule type" value="mRNA"/>
</dbReference>
<dbReference type="SMR" id="Q05893"/>
<dbReference type="BioCyc" id="MetaCyc:MONOMER-18260"/>
<dbReference type="SABIO-RK" id="Q05893"/>
<dbReference type="GO" id="GO:0005829">
    <property type="term" value="C:cytosol"/>
    <property type="evidence" value="ECO:0007669"/>
    <property type="project" value="TreeGrafter"/>
</dbReference>
<dbReference type="GO" id="GO:0005525">
    <property type="term" value="F:GTP binding"/>
    <property type="evidence" value="ECO:0007669"/>
    <property type="project" value="UniProtKB-KW"/>
</dbReference>
<dbReference type="GO" id="GO:0030145">
    <property type="term" value="F:manganese ion binding"/>
    <property type="evidence" value="ECO:0007669"/>
    <property type="project" value="TreeGrafter"/>
</dbReference>
<dbReference type="GO" id="GO:0004613">
    <property type="term" value="F:phosphoenolpyruvate carboxykinase (GTP) activity"/>
    <property type="evidence" value="ECO:0007669"/>
    <property type="project" value="UniProtKB-EC"/>
</dbReference>
<dbReference type="GO" id="GO:0071333">
    <property type="term" value="P:cellular response to glucose stimulus"/>
    <property type="evidence" value="ECO:0007669"/>
    <property type="project" value="TreeGrafter"/>
</dbReference>
<dbReference type="GO" id="GO:0006094">
    <property type="term" value="P:gluconeogenesis"/>
    <property type="evidence" value="ECO:0007669"/>
    <property type="project" value="InterPro"/>
</dbReference>
<dbReference type="GO" id="GO:0046327">
    <property type="term" value="P:glycerol biosynthetic process from pyruvate"/>
    <property type="evidence" value="ECO:0007669"/>
    <property type="project" value="TreeGrafter"/>
</dbReference>
<dbReference type="GO" id="GO:0006107">
    <property type="term" value="P:oxaloacetate metabolic process"/>
    <property type="evidence" value="ECO:0007669"/>
    <property type="project" value="TreeGrafter"/>
</dbReference>
<dbReference type="GO" id="GO:0019543">
    <property type="term" value="P:propionate catabolic process"/>
    <property type="evidence" value="ECO:0007669"/>
    <property type="project" value="TreeGrafter"/>
</dbReference>
<dbReference type="GO" id="GO:0033993">
    <property type="term" value="P:response to lipid"/>
    <property type="evidence" value="ECO:0007669"/>
    <property type="project" value="TreeGrafter"/>
</dbReference>
<dbReference type="GO" id="GO:0042594">
    <property type="term" value="P:response to starvation"/>
    <property type="evidence" value="ECO:0007669"/>
    <property type="project" value="TreeGrafter"/>
</dbReference>
<dbReference type="CDD" id="cd00819">
    <property type="entry name" value="PEPCK_GTP"/>
    <property type="match status" value="1"/>
</dbReference>
<dbReference type="FunFam" id="3.40.449.10:FF:000003">
    <property type="entry name" value="Phosphoenolpyruvate carboxykinase, cytosolic [GTP]"/>
    <property type="match status" value="1"/>
</dbReference>
<dbReference type="FunFam" id="2.170.8.10:FF:000010">
    <property type="entry name" value="Phosphoenolypyruvate CarboxyKinase"/>
    <property type="match status" value="1"/>
</dbReference>
<dbReference type="Gene3D" id="3.90.228.20">
    <property type="match status" value="1"/>
</dbReference>
<dbReference type="Gene3D" id="3.40.449.10">
    <property type="entry name" value="Phosphoenolpyruvate Carboxykinase, domain 1"/>
    <property type="match status" value="1"/>
</dbReference>
<dbReference type="Gene3D" id="2.170.8.10">
    <property type="entry name" value="Phosphoenolpyruvate Carboxykinase, domain 2"/>
    <property type="match status" value="1"/>
</dbReference>
<dbReference type="HAMAP" id="MF_00452">
    <property type="entry name" value="PEPCK_GTP"/>
    <property type="match status" value="1"/>
</dbReference>
<dbReference type="InterPro" id="IPR018091">
    <property type="entry name" value="PEP_carboxykin_GTP_CS"/>
</dbReference>
<dbReference type="InterPro" id="IPR013035">
    <property type="entry name" value="PEP_carboxykinase_C"/>
</dbReference>
<dbReference type="InterPro" id="IPR008209">
    <property type="entry name" value="PEP_carboxykinase_GTP"/>
</dbReference>
<dbReference type="InterPro" id="IPR035077">
    <property type="entry name" value="PEP_carboxykinase_GTP_C"/>
</dbReference>
<dbReference type="InterPro" id="IPR035078">
    <property type="entry name" value="PEP_carboxykinase_GTP_N"/>
</dbReference>
<dbReference type="InterPro" id="IPR008210">
    <property type="entry name" value="PEP_carboxykinase_N"/>
</dbReference>
<dbReference type="NCBIfam" id="NF003253">
    <property type="entry name" value="PRK04210.1"/>
    <property type="match status" value="1"/>
</dbReference>
<dbReference type="PANTHER" id="PTHR11561">
    <property type="entry name" value="PHOSPHOENOLPYRUVATE CARBOXYKINASE"/>
    <property type="match status" value="1"/>
</dbReference>
<dbReference type="PANTHER" id="PTHR11561:SF0">
    <property type="entry name" value="PHOSPHOENOLPYRUVATE CARBOXYKINASE [GTP]-RELATED"/>
    <property type="match status" value="1"/>
</dbReference>
<dbReference type="Pfam" id="PF00821">
    <property type="entry name" value="PEPCK_GTP"/>
    <property type="match status" value="1"/>
</dbReference>
<dbReference type="Pfam" id="PF17297">
    <property type="entry name" value="PEPCK_N"/>
    <property type="match status" value="1"/>
</dbReference>
<dbReference type="PIRSF" id="PIRSF001348">
    <property type="entry name" value="PEP_carboxykinase_GTP"/>
    <property type="match status" value="1"/>
</dbReference>
<dbReference type="SUPFAM" id="SSF68923">
    <property type="entry name" value="PEP carboxykinase N-terminal domain"/>
    <property type="match status" value="1"/>
</dbReference>
<dbReference type="SUPFAM" id="SSF53795">
    <property type="entry name" value="PEP carboxykinase-like"/>
    <property type="match status" value="1"/>
</dbReference>
<dbReference type="PROSITE" id="PS00505">
    <property type="entry name" value="PEPCK_GTP"/>
    <property type="match status" value="1"/>
</dbReference>
<protein>
    <recommendedName>
        <fullName>Phosphoenolpyruvate carboxykinase [GTP]</fullName>
        <shortName>PEPCK</shortName>
        <ecNumber>4.1.1.32</ecNumber>
    </recommendedName>
</protein>